<protein>
    <recommendedName>
        <fullName evidence="1">Chromatin protein Cren7</fullName>
    </recommendedName>
</protein>
<dbReference type="EMBL" id="CP001014">
    <property type="protein sequence ID" value="ACB39568.1"/>
    <property type="molecule type" value="Genomic_DNA"/>
</dbReference>
<dbReference type="RefSeq" id="WP_012349988.1">
    <property type="nucleotide sequence ID" value="NC_010525.1"/>
</dbReference>
<dbReference type="SMR" id="B1YCQ5"/>
<dbReference type="STRING" id="444157.Tneu_0629"/>
<dbReference type="GeneID" id="6166258"/>
<dbReference type="KEGG" id="tne:Tneu_0629"/>
<dbReference type="eggNOG" id="arCOG04114">
    <property type="taxonomic scope" value="Archaea"/>
</dbReference>
<dbReference type="HOGENOM" id="CLU_192664_0_0_2"/>
<dbReference type="OrthoDB" id="38142at2157"/>
<dbReference type="Proteomes" id="UP000001694">
    <property type="component" value="Chromosome"/>
</dbReference>
<dbReference type="GO" id="GO:0005694">
    <property type="term" value="C:chromosome"/>
    <property type="evidence" value="ECO:0007669"/>
    <property type="project" value="UniProtKB-SubCell"/>
</dbReference>
<dbReference type="GO" id="GO:0005737">
    <property type="term" value="C:cytoplasm"/>
    <property type="evidence" value="ECO:0007669"/>
    <property type="project" value="UniProtKB-SubCell"/>
</dbReference>
<dbReference type="GO" id="GO:0003690">
    <property type="term" value="F:double-stranded DNA binding"/>
    <property type="evidence" value="ECO:0007669"/>
    <property type="project" value="UniProtKB-UniRule"/>
</dbReference>
<dbReference type="Gene3D" id="2.30.30.610">
    <property type="entry name" value="Chromatin protein Cren7"/>
    <property type="match status" value="1"/>
</dbReference>
<dbReference type="HAMAP" id="MF_01387">
    <property type="entry name" value="Chromatin_Cren7"/>
    <property type="match status" value="1"/>
</dbReference>
<dbReference type="InterPro" id="IPR038647">
    <property type="entry name" value="Cren7_sf"/>
</dbReference>
<dbReference type="InterPro" id="IPR020906">
    <property type="entry name" value="dsDNA-bd_Cren7"/>
</dbReference>
<dbReference type="Pfam" id="PF11520">
    <property type="entry name" value="Cren7"/>
    <property type="match status" value="1"/>
</dbReference>
<comment type="function">
    <text evidence="1">A chromatin protein, binds double-stranded DNA without sequence specificity. Constrains negative DNA supercoils.</text>
</comment>
<comment type="subunit">
    <text evidence="1">Monomer.</text>
</comment>
<comment type="subcellular location">
    <subcellularLocation>
        <location evidence="1">Chromosome</location>
    </subcellularLocation>
    <subcellularLocation>
        <location evidence="1">Cytoplasm</location>
    </subcellularLocation>
</comment>
<comment type="PTM">
    <text evidence="1">Methylated at multiple sites, to varying extents.</text>
</comment>
<comment type="similarity">
    <text evidence="1">Belongs to the Cren7 family.</text>
</comment>
<feature type="chain" id="PRO_0000345180" description="Chromatin protein Cren7">
    <location>
        <begin position="1"/>
        <end position="59"/>
    </location>
</feature>
<name>CREN7_PYRNV</name>
<keyword id="KW-0158">Chromosome</keyword>
<keyword id="KW-0963">Cytoplasm</keyword>
<keyword id="KW-0238">DNA-binding</keyword>
<keyword id="KW-0488">Methylation</keyword>
<gene>
    <name evidence="1" type="primary">creN7</name>
    <name type="ordered locus">Tneu_0629</name>
</gene>
<evidence type="ECO:0000255" key="1">
    <source>
        <dbReference type="HAMAP-Rule" id="MF_01387"/>
    </source>
</evidence>
<reference key="1">
    <citation type="submission" date="2008-03" db="EMBL/GenBank/DDBJ databases">
        <title>Complete sequence of Thermoproteus neutrophilus V24Sta.</title>
        <authorList>
            <consortium name="US DOE Joint Genome Institute"/>
            <person name="Copeland A."/>
            <person name="Lucas S."/>
            <person name="Lapidus A."/>
            <person name="Glavina del Rio T."/>
            <person name="Dalin E."/>
            <person name="Tice H."/>
            <person name="Bruce D."/>
            <person name="Goodwin L."/>
            <person name="Pitluck S."/>
            <person name="Sims D."/>
            <person name="Brettin T."/>
            <person name="Detter J.C."/>
            <person name="Han C."/>
            <person name="Kuske C.R."/>
            <person name="Schmutz J."/>
            <person name="Larimer F."/>
            <person name="Land M."/>
            <person name="Hauser L."/>
            <person name="Kyrpides N."/>
            <person name="Mikhailova N."/>
            <person name="Biddle J.F."/>
            <person name="Zhang Z."/>
            <person name="Fitz-Gibbon S.T."/>
            <person name="Lowe T.M."/>
            <person name="Saltikov C."/>
            <person name="House C.H."/>
            <person name="Richardson P."/>
        </authorList>
    </citation>
    <scope>NUCLEOTIDE SEQUENCE [LARGE SCALE GENOMIC DNA]</scope>
    <source>
        <strain>DSM 2338 / JCM 9278 / NBRC 100436 / V24Sta</strain>
    </source>
</reference>
<sequence length="59" mass="6822">MAEEILNREYEVEYGGKRYWLRPSKAWVLQPPGKPGVVIALFKLPDGRTVRKAIMRLPP</sequence>
<proteinExistence type="inferred from homology"/>
<accession>B1YCQ5</accession>
<organism>
    <name type="scientific">Pyrobaculum neutrophilum (strain DSM 2338 / JCM 9278 / NBRC 100436 / V24Sta)</name>
    <name type="common">Thermoproteus neutrophilus</name>
    <dbReference type="NCBI Taxonomy" id="444157"/>
    <lineage>
        <taxon>Archaea</taxon>
        <taxon>Thermoproteota</taxon>
        <taxon>Thermoprotei</taxon>
        <taxon>Thermoproteales</taxon>
        <taxon>Thermoproteaceae</taxon>
        <taxon>Pyrobaculum</taxon>
    </lineage>
</organism>